<proteinExistence type="inferred from homology"/>
<protein>
    <recommendedName>
        <fullName evidence="1">UPF0248 protein TON_0940</fullName>
    </recommendedName>
</protein>
<name>Y940_THEON</name>
<accession>B6YWG5</accession>
<evidence type="ECO:0000255" key="1">
    <source>
        <dbReference type="HAMAP-Rule" id="MF_01245"/>
    </source>
</evidence>
<feature type="chain" id="PRO_1000139817" description="UPF0248 protein TON_0940">
    <location>
        <begin position="1"/>
        <end position="87"/>
    </location>
</feature>
<gene>
    <name type="ordered locus">TON_0940</name>
</gene>
<organism>
    <name type="scientific">Thermococcus onnurineus (strain NA1)</name>
    <dbReference type="NCBI Taxonomy" id="523850"/>
    <lineage>
        <taxon>Archaea</taxon>
        <taxon>Methanobacteriati</taxon>
        <taxon>Methanobacteriota</taxon>
        <taxon>Thermococci</taxon>
        <taxon>Thermococcales</taxon>
        <taxon>Thermococcaceae</taxon>
        <taxon>Thermococcus</taxon>
    </lineage>
</organism>
<reference key="1">
    <citation type="journal article" date="2008" name="J. Bacteriol.">
        <title>The complete genome sequence of Thermococcus onnurineus NA1 reveals a mixed heterotrophic and carboxydotrophic metabolism.</title>
        <authorList>
            <person name="Lee H.S."/>
            <person name="Kang S.G."/>
            <person name="Bae S.S."/>
            <person name="Lim J.K."/>
            <person name="Cho Y."/>
            <person name="Kim Y.J."/>
            <person name="Jeon J.H."/>
            <person name="Cha S.-S."/>
            <person name="Kwon K.K."/>
            <person name="Kim H.-T."/>
            <person name="Park C.-J."/>
            <person name="Lee H.-W."/>
            <person name="Kim S.I."/>
            <person name="Chun J."/>
            <person name="Colwell R.R."/>
            <person name="Kim S.-J."/>
            <person name="Lee J.-H."/>
        </authorList>
    </citation>
    <scope>NUCLEOTIDE SEQUENCE [LARGE SCALE GENOMIC DNA]</scope>
    <source>
        <strain>NA1</strain>
    </source>
</reference>
<sequence>MRKGSVKEVLAKLKYDPREDERDYYIIIEHRGAYGDVKKIPVELIELGHGYFFVGDAQIPYHRIRRVVKKDGKVIWETRKDRRGESD</sequence>
<dbReference type="EMBL" id="CP000855">
    <property type="protein sequence ID" value="ACJ16428.1"/>
    <property type="molecule type" value="Genomic_DNA"/>
</dbReference>
<dbReference type="RefSeq" id="WP_012571900.1">
    <property type="nucleotide sequence ID" value="NC_011529.1"/>
</dbReference>
<dbReference type="STRING" id="523850.TON_0940"/>
<dbReference type="GeneID" id="7017243"/>
<dbReference type="KEGG" id="ton:TON_0940"/>
<dbReference type="PATRIC" id="fig|523850.10.peg.948"/>
<dbReference type="eggNOG" id="arCOG01302">
    <property type="taxonomic scope" value="Archaea"/>
</dbReference>
<dbReference type="HOGENOM" id="CLU_172276_3_1_2"/>
<dbReference type="OrthoDB" id="14794at2157"/>
<dbReference type="Proteomes" id="UP000002727">
    <property type="component" value="Chromosome"/>
</dbReference>
<dbReference type="HAMAP" id="MF_01245">
    <property type="entry name" value="UPF0248"/>
    <property type="match status" value="1"/>
</dbReference>
<dbReference type="InterPro" id="IPR040459">
    <property type="entry name" value="MJ1316"/>
</dbReference>
<dbReference type="InterPro" id="IPR007547">
    <property type="entry name" value="UPF0248"/>
</dbReference>
<dbReference type="NCBIfam" id="NF003272">
    <property type="entry name" value="PRK04257.1"/>
    <property type="match status" value="1"/>
</dbReference>
<dbReference type="Pfam" id="PF04457">
    <property type="entry name" value="MJ1316"/>
    <property type="match status" value="1"/>
</dbReference>
<comment type="similarity">
    <text evidence="1">Belongs to the UPF0248 family.</text>
</comment>